<accession>Q7V8F6</accession>
<evidence type="ECO:0000255" key="1">
    <source>
        <dbReference type="HAMAP-Rule" id="MF_00490"/>
    </source>
</evidence>
<gene>
    <name evidence="1" type="primary">comB</name>
    <name type="ordered locus">PMT_0396</name>
</gene>
<keyword id="KW-0378">Hydrolase</keyword>
<keyword id="KW-0460">Magnesium</keyword>
<keyword id="KW-1185">Reference proteome</keyword>
<organism>
    <name type="scientific">Prochlorococcus marinus (strain MIT 9313)</name>
    <dbReference type="NCBI Taxonomy" id="74547"/>
    <lineage>
        <taxon>Bacteria</taxon>
        <taxon>Bacillati</taxon>
        <taxon>Cyanobacteriota</taxon>
        <taxon>Cyanophyceae</taxon>
        <taxon>Synechococcales</taxon>
        <taxon>Prochlorococcaceae</taxon>
        <taxon>Prochlorococcus</taxon>
    </lineage>
</organism>
<feature type="chain" id="PRO_0000081471" description="Probable 2-phosphosulfolactate phosphatase">
    <location>
        <begin position="1"/>
        <end position="243"/>
    </location>
</feature>
<sequence>MQLAYFHVAADVPQGAEPDAAVVIDVLRATTTIAWALNNGAEAVETFADLDQLRQSAAQWPESSRLMLGERGGQRIEGFDLGNSPVAVVPEQVAGKRLFMSTTNGTRSLQRVRGVQRLFTLALPNRKAVADHLLMDPPEQLWIVGSGWEGAYSLEDSLAAGALADLLLDAAADEACVANDELTAALALWQQWKHDPEACLRQASHGQRLIGLGDHDADFRCCAELDRLSVVPVQVKPGVLCAS</sequence>
<name>COMB_PROMM</name>
<dbReference type="EC" id="3.1.3.71" evidence="1"/>
<dbReference type="EMBL" id="BX548175">
    <property type="protein sequence ID" value="CAE20571.1"/>
    <property type="molecule type" value="Genomic_DNA"/>
</dbReference>
<dbReference type="RefSeq" id="WP_011129775.1">
    <property type="nucleotide sequence ID" value="NC_005071.1"/>
</dbReference>
<dbReference type="SMR" id="Q7V8F6"/>
<dbReference type="KEGG" id="pmt:PMT_0396"/>
<dbReference type="eggNOG" id="COG2045">
    <property type="taxonomic scope" value="Bacteria"/>
</dbReference>
<dbReference type="HOGENOM" id="CLU_070028_0_1_3"/>
<dbReference type="OrthoDB" id="4913at2"/>
<dbReference type="Proteomes" id="UP000001423">
    <property type="component" value="Chromosome"/>
</dbReference>
<dbReference type="GO" id="GO:0050532">
    <property type="term" value="F:2-phosphosulfolactate phosphatase activity"/>
    <property type="evidence" value="ECO:0007669"/>
    <property type="project" value="UniProtKB-UniRule"/>
</dbReference>
<dbReference type="GO" id="GO:0000287">
    <property type="term" value="F:magnesium ion binding"/>
    <property type="evidence" value="ECO:0007669"/>
    <property type="project" value="UniProtKB-UniRule"/>
</dbReference>
<dbReference type="GO" id="GO:0050545">
    <property type="term" value="F:sulfopyruvate decarboxylase activity"/>
    <property type="evidence" value="ECO:0007669"/>
    <property type="project" value="TreeGrafter"/>
</dbReference>
<dbReference type="FunFam" id="3.90.1560.10:FF:000001">
    <property type="entry name" value="Probable 2-phosphosulfolactate phosphatase"/>
    <property type="match status" value="1"/>
</dbReference>
<dbReference type="Gene3D" id="3.90.1560.10">
    <property type="entry name" value="ComB-like"/>
    <property type="match status" value="1"/>
</dbReference>
<dbReference type="HAMAP" id="MF_00490">
    <property type="entry name" value="ComB"/>
    <property type="match status" value="1"/>
</dbReference>
<dbReference type="InterPro" id="IPR005238">
    <property type="entry name" value="ComB-like"/>
</dbReference>
<dbReference type="InterPro" id="IPR036702">
    <property type="entry name" value="ComB-like_sf"/>
</dbReference>
<dbReference type="NCBIfam" id="NF002053">
    <property type="entry name" value="PRK00886.1-2"/>
    <property type="match status" value="1"/>
</dbReference>
<dbReference type="PANTHER" id="PTHR37311">
    <property type="entry name" value="2-PHOSPHOSULFOLACTATE PHOSPHATASE-RELATED"/>
    <property type="match status" value="1"/>
</dbReference>
<dbReference type="PANTHER" id="PTHR37311:SF1">
    <property type="entry name" value="2-PHOSPHOSULFOLACTATE PHOSPHATASE-RELATED"/>
    <property type="match status" value="1"/>
</dbReference>
<dbReference type="Pfam" id="PF04029">
    <property type="entry name" value="2-ph_phosp"/>
    <property type="match status" value="1"/>
</dbReference>
<dbReference type="SUPFAM" id="SSF142823">
    <property type="entry name" value="ComB-like"/>
    <property type="match status" value="1"/>
</dbReference>
<comment type="catalytic activity">
    <reaction evidence="1">
        <text>(2R)-O-phospho-3-sulfolactate + H2O = (2R)-3-sulfolactate + phosphate</text>
        <dbReference type="Rhea" id="RHEA:23416"/>
        <dbReference type="ChEBI" id="CHEBI:15377"/>
        <dbReference type="ChEBI" id="CHEBI:15597"/>
        <dbReference type="ChEBI" id="CHEBI:43474"/>
        <dbReference type="ChEBI" id="CHEBI:58738"/>
        <dbReference type="EC" id="3.1.3.71"/>
    </reaction>
</comment>
<comment type="cofactor">
    <cofactor evidence="1">
        <name>Mg(2+)</name>
        <dbReference type="ChEBI" id="CHEBI:18420"/>
    </cofactor>
</comment>
<comment type="similarity">
    <text evidence="1">Belongs to the ComB family.</text>
</comment>
<proteinExistence type="inferred from homology"/>
<reference key="1">
    <citation type="journal article" date="2003" name="Nature">
        <title>Genome divergence in two Prochlorococcus ecotypes reflects oceanic niche differentiation.</title>
        <authorList>
            <person name="Rocap G."/>
            <person name="Larimer F.W."/>
            <person name="Lamerdin J.E."/>
            <person name="Malfatti S."/>
            <person name="Chain P."/>
            <person name="Ahlgren N.A."/>
            <person name="Arellano A."/>
            <person name="Coleman M."/>
            <person name="Hauser L."/>
            <person name="Hess W.R."/>
            <person name="Johnson Z.I."/>
            <person name="Land M.L."/>
            <person name="Lindell D."/>
            <person name="Post A.F."/>
            <person name="Regala W."/>
            <person name="Shah M."/>
            <person name="Shaw S.L."/>
            <person name="Steglich C."/>
            <person name="Sullivan M.B."/>
            <person name="Ting C.S."/>
            <person name="Tolonen A."/>
            <person name="Webb E.A."/>
            <person name="Zinser E.R."/>
            <person name="Chisholm S.W."/>
        </authorList>
    </citation>
    <scope>NUCLEOTIDE SEQUENCE [LARGE SCALE GENOMIC DNA]</scope>
    <source>
        <strain>MIT 9313</strain>
    </source>
</reference>
<protein>
    <recommendedName>
        <fullName evidence="1">Probable 2-phosphosulfolactate phosphatase</fullName>
        <ecNumber evidence="1">3.1.3.71</ecNumber>
    </recommendedName>
</protein>